<feature type="chain" id="PRO_0000436271" description="Kinesin-like protein KIN-5A">
    <location>
        <begin position="1"/>
        <end position="1056"/>
    </location>
</feature>
<feature type="domain" description="Kinesin motor" evidence="4">
    <location>
        <begin position="49"/>
        <end position="395"/>
    </location>
</feature>
<feature type="region of interest" description="Disordered" evidence="5">
    <location>
        <begin position="1"/>
        <end position="44"/>
    </location>
</feature>
<feature type="coiled-coil region" evidence="3">
    <location>
        <begin position="443"/>
        <end position="525"/>
    </location>
</feature>
<feature type="compositionally biased region" description="Basic and acidic residues" evidence="5">
    <location>
        <begin position="14"/>
        <end position="24"/>
    </location>
</feature>
<feature type="binding site" evidence="4">
    <location>
        <begin position="135"/>
        <end position="142"/>
    </location>
    <ligand>
        <name>ATP</name>
        <dbReference type="ChEBI" id="CHEBI:30616"/>
    </ligand>
</feature>
<evidence type="ECO:0000250" key="1">
    <source>
        <dbReference type="UniProtKB" id="F4IIS5"/>
    </source>
</evidence>
<evidence type="ECO:0000250" key="2">
    <source>
        <dbReference type="UniProtKB" id="O23826"/>
    </source>
</evidence>
<evidence type="ECO:0000255" key="3"/>
<evidence type="ECO:0000255" key="4">
    <source>
        <dbReference type="PROSITE-ProRule" id="PRU00283"/>
    </source>
</evidence>
<evidence type="ECO:0000256" key="5">
    <source>
        <dbReference type="SAM" id="MobiDB-lite"/>
    </source>
</evidence>
<evidence type="ECO:0000303" key="6">
    <source>
    </source>
</evidence>
<evidence type="ECO:0000305" key="7"/>
<evidence type="ECO:0000312" key="8">
    <source>
        <dbReference type="EMBL" id="AAV44208.1"/>
    </source>
</evidence>
<evidence type="ECO:0000312" key="9">
    <source>
        <dbReference type="EMBL" id="BAS91988.1"/>
    </source>
</evidence>
<evidence type="ECO:0000312" key="10">
    <source>
        <dbReference type="EMBL" id="EEE62121.1"/>
    </source>
</evidence>
<name>KN5A_ORYSJ</name>
<gene>
    <name evidence="7" type="primary">KIN5A</name>
    <name evidence="9" type="ordered locus">Os05g0117798</name>
    <name evidence="7" type="ordered locus">LOC_Os05g02670</name>
    <name evidence="10" type="ORF">OsJ_16908</name>
    <name evidence="8" type="ORF">P0496H07.17</name>
</gene>
<reference key="1">
    <citation type="journal article" date="2005" name="Mol. Genet. Genomics">
        <title>A fine physical map of the rice chromosome 5.</title>
        <authorList>
            <person name="Cheng C.-H."/>
            <person name="Chung M.C."/>
            <person name="Liu S.-M."/>
            <person name="Chen S.-K."/>
            <person name="Kao F.Y."/>
            <person name="Lin S.-J."/>
            <person name="Hsiao S.-H."/>
            <person name="Tseng I.C."/>
            <person name="Hsing Y.-I.C."/>
            <person name="Wu H.-P."/>
            <person name="Chen C.-S."/>
            <person name="Shaw J.-F."/>
            <person name="Wu J."/>
            <person name="Matsumoto T."/>
            <person name="Sasaki T."/>
            <person name="Chen H.-C."/>
            <person name="Chow T.-Y."/>
        </authorList>
    </citation>
    <scope>NUCLEOTIDE SEQUENCE [LARGE SCALE GENOMIC DNA]</scope>
    <source>
        <strain>cv. Nipponbare</strain>
    </source>
</reference>
<reference key="2">
    <citation type="journal article" date="2005" name="Nature">
        <title>The map-based sequence of the rice genome.</title>
        <authorList>
            <consortium name="International rice genome sequencing project (IRGSP)"/>
        </authorList>
    </citation>
    <scope>NUCLEOTIDE SEQUENCE [LARGE SCALE GENOMIC DNA]</scope>
    <source>
        <strain>cv. Nipponbare</strain>
    </source>
</reference>
<reference key="3">
    <citation type="journal article" date="2008" name="Nucleic Acids Res.">
        <title>The rice annotation project database (RAP-DB): 2008 update.</title>
        <authorList>
            <consortium name="The rice annotation project (RAP)"/>
        </authorList>
    </citation>
    <scope>GENOME REANNOTATION</scope>
    <source>
        <strain>cv. Nipponbare</strain>
    </source>
</reference>
<reference key="4">
    <citation type="journal article" date="2013" name="Rice">
        <title>Improvement of the Oryza sativa Nipponbare reference genome using next generation sequence and optical map data.</title>
        <authorList>
            <person name="Kawahara Y."/>
            <person name="de la Bastide M."/>
            <person name="Hamilton J.P."/>
            <person name="Kanamori H."/>
            <person name="McCombie W.R."/>
            <person name="Ouyang S."/>
            <person name="Schwartz D.C."/>
            <person name="Tanaka T."/>
            <person name="Wu J."/>
            <person name="Zhou S."/>
            <person name="Childs K.L."/>
            <person name="Davidson R.M."/>
            <person name="Lin H."/>
            <person name="Quesada-Ocampo L."/>
            <person name="Vaillancourt B."/>
            <person name="Sakai H."/>
            <person name="Lee S.S."/>
            <person name="Kim J."/>
            <person name="Numa H."/>
            <person name="Itoh T."/>
            <person name="Buell C.R."/>
            <person name="Matsumoto T."/>
        </authorList>
    </citation>
    <scope>GENOME REANNOTATION</scope>
    <source>
        <strain>cv. Nipponbare</strain>
    </source>
</reference>
<reference key="5">
    <citation type="journal article" date="2005" name="PLoS Biol.">
        <title>The genomes of Oryza sativa: a history of duplications.</title>
        <authorList>
            <person name="Yu J."/>
            <person name="Wang J."/>
            <person name="Lin W."/>
            <person name="Li S."/>
            <person name="Li H."/>
            <person name="Zhou J."/>
            <person name="Ni P."/>
            <person name="Dong W."/>
            <person name="Hu S."/>
            <person name="Zeng C."/>
            <person name="Zhang J."/>
            <person name="Zhang Y."/>
            <person name="Li R."/>
            <person name="Xu Z."/>
            <person name="Li S."/>
            <person name="Li X."/>
            <person name="Zheng H."/>
            <person name="Cong L."/>
            <person name="Lin L."/>
            <person name="Yin J."/>
            <person name="Geng J."/>
            <person name="Li G."/>
            <person name="Shi J."/>
            <person name="Liu J."/>
            <person name="Lv H."/>
            <person name="Li J."/>
            <person name="Wang J."/>
            <person name="Deng Y."/>
            <person name="Ran L."/>
            <person name="Shi X."/>
            <person name="Wang X."/>
            <person name="Wu Q."/>
            <person name="Li C."/>
            <person name="Ren X."/>
            <person name="Wang J."/>
            <person name="Wang X."/>
            <person name="Li D."/>
            <person name="Liu D."/>
            <person name="Zhang X."/>
            <person name="Ji Z."/>
            <person name="Zhao W."/>
            <person name="Sun Y."/>
            <person name="Zhang Z."/>
            <person name="Bao J."/>
            <person name="Han Y."/>
            <person name="Dong L."/>
            <person name="Ji J."/>
            <person name="Chen P."/>
            <person name="Wu S."/>
            <person name="Liu J."/>
            <person name="Xiao Y."/>
            <person name="Bu D."/>
            <person name="Tan J."/>
            <person name="Yang L."/>
            <person name="Ye C."/>
            <person name="Zhang J."/>
            <person name="Xu J."/>
            <person name="Zhou Y."/>
            <person name="Yu Y."/>
            <person name="Zhang B."/>
            <person name="Zhuang S."/>
            <person name="Wei H."/>
            <person name="Liu B."/>
            <person name="Lei M."/>
            <person name="Yu H."/>
            <person name="Li Y."/>
            <person name="Xu H."/>
            <person name="Wei S."/>
            <person name="He X."/>
            <person name="Fang L."/>
            <person name="Zhang Z."/>
            <person name="Zhang Y."/>
            <person name="Huang X."/>
            <person name="Su Z."/>
            <person name="Tong W."/>
            <person name="Li J."/>
            <person name="Tong Z."/>
            <person name="Li S."/>
            <person name="Ye J."/>
            <person name="Wang L."/>
            <person name="Fang L."/>
            <person name="Lei T."/>
            <person name="Chen C.-S."/>
            <person name="Chen H.-C."/>
            <person name="Xu Z."/>
            <person name="Li H."/>
            <person name="Huang H."/>
            <person name="Zhang F."/>
            <person name="Xu H."/>
            <person name="Li N."/>
            <person name="Zhao C."/>
            <person name="Li S."/>
            <person name="Dong L."/>
            <person name="Huang Y."/>
            <person name="Li L."/>
            <person name="Xi Y."/>
            <person name="Qi Q."/>
            <person name="Li W."/>
            <person name="Zhang B."/>
            <person name="Hu W."/>
            <person name="Zhang Y."/>
            <person name="Tian X."/>
            <person name="Jiao Y."/>
            <person name="Liang X."/>
            <person name="Jin J."/>
            <person name="Gao L."/>
            <person name="Zheng W."/>
            <person name="Hao B."/>
            <person name="Liu S.-M."/>
            <person name="Wang W."/>
            <person name="Yuan L."/>
            <person name="Cao M."/>
            <person name="McDermott J."/>
            <person name="Samudrala R."/>
            <person name="Wang J."/>
            <person name="Wong G.K.-S."/>
            <person name="Yang H."/>
        </authorList>
    </citation>
    <scope>NUCLEOTIDE SEQUENCE [LARGE SCALE GENOMIC DNA]</scope>
    <source>
        <strain>cv. Nipponbare</strain>
    </source>
</reference>
<reference key="6">
    <citation type="journal article" date="2003" name="Science">
        <title>Collection, mapping, and annotation of over 28,000 cDNA clones from japonica rice.</title>
        <authorList>
            <consortium name="The rice full-length cDNA consortium"/>
        </authorList>
    </citation>
    <scope>NUCLEOTIDE SEQUENCE [LARGE SCALE MRNA]</scope>
    <source>
        <strain>cv. Nipponbare</strain>
    </source>
</reference>
<reference key="7">
    <citation type="journal article" date="2006" name="Trends Plant Sci.">
        <title>Mitosis-specific kinesins in Arabidopsis.</title>
        <authorList>
            <person name="Vanstraelen M."/>
            <person name="Inze D."/>
            <person name="Geelen D."/>
        </authorList>
    </citation>
    <scope>REVIEW</scope>
</reference>
<reference key="8">
    <citation type="journal article" date="2009" name="Ann. Bot.">
        <title>Evaluating the microtubule cytoskeleton and its interacting proteins in monocots by mining the rice genome.</title>
        <authorList>
            <person name="Guo L."/>
            <person name="Ho C.M."/>
            <person name="Kong Z."/>
            <person name="Lee Y.R."/>
            <person name="Qian Q."/>
            <person name="Liu B."/>
        </authorList>
    </citation>
    <scope>GENE FAMILY</scope>
    <scope>NOMENCLATURE</scope>
</reference>
<sequence length="1056" mass="117809">MDRRIGLTSPSPKSTEKSGRDLRSGGDANGGANTNSNSIPRGDKEKGVNVQVILRCRPMSDEETKSNTPVVISCNERRREVAATQIIANKQIDRTFAFDKVFGPASKQKDLFEQSISPIVNEVLEGYNCTIFAYGQTGTGKTYTMEGGGTRKTKNGELPTDAGVIPRAVRQIFDILEAQCAEYSMKVTFLELYNEEITDLLAPEEPKFPIVPEDKTKKPIALMEDGKGGVFVRGLEEEVVYSAGEIYKILDKGSAKRRTAETLLNKQSSRSHSIFSITIHIKELTHEGEEMIKIGKLNLVDLAGSENISRSGARDGRAREAGEINKSLLTLGRVINALVEHSGHVPYRDSKLTRLLRDSLGGKTKTCIIATISPSVYCLEETLSTLDYAHRAKNIKNKPEVNQRMMKSAVIKDLYSEIDRLKQEVFAAREKNGIYIPRERYLQEEAEKKAMTEKIERLGADLEARDKQLVELKELYDAEQLLSAELSEKLGKTQKDLEDTKNVLHDLEEKYNEAESTIKEKEYVIFNLLKSEKSLVDCAYNLRAELENAAADVSGLFSKIERKDKIEDGNRSLVQRFRSQLTNQLDTLHKTVSTSVMQQENHLKEMEDDMQSFVSSKDEAAQGLRESIQKLKLLHGSGITALDSLAGEIDMNSQSTFERLNSQVQSHTSSLEQCFGGIASEADNLLNELQCSLSKQEERLTQFAKKQREGHLRAVEASRSISKITAGFFSSLDVHASKLTSILEETQSVQDQQLLDLEKKFEECAANEEKQLLEKVAEMLASSHARKKKLVQTAVGNLRESAVNRTSHLQNEISTAQDFTSSVREKWGFYMEETEKNYIEDTTAVDSGRSCLAEVLVECKAKTTMGAQQWKNAEDSLFSLGKGNVESADSIVRTGTEANQSLRSKLSSAVSTTLEEIDIANKALLSSIDSSLKLDHDACANIGSIIKPCHEEISELKGGHYHRVVEITENAGKCLEEEYLVDEPSCSTPRRRQIDLPSMESIEQLRTPDYDELLKSFRESRASLKQANGDMKHFLEVQEATPPSITDPRAPLIARN</sequence>
<protein>
    <recommendedName>
        <fullName evidence="7">Kinesin-like protein KIN-5A</fullName>
    </recommendedName>
</protein>
<accession>Q5W7C6</accession>
<proteinExistence type="evidence at transcript level"/>
<comment type="function">
    <text evidence="1 2">Responsible for microtubule translocation. May be important for the organization of phragmoplast-specific arrays of microtubules (By similarity). Plays an essential role in stabilizing the mitotic spindle. Required during mitotic cytokinesis (By similarity).</text>
</comment>
<comment type="subcellular location">
    <subcellularLocation>
        <location evidence="1">Cytoplasm</location>
        <location evidence="1">Cytoskeleton</location>
    </subcellularLocation>
    <subcellularLocation>
        <location evidence="1">Cytoplasm</location>
        <location evidence="1">Cytoskeleton</location>
        <location evidence="1">Spindle</location>
    </subcellularLocation>
    <text evidence="1">Microtubule-associated.</text>
</comment>
<comment type="similarity">
    <text evidence="6">Belongs to the TRAFAC class myosin-kinesin ATPase superfamily. Kinesin family. KIN-5/BimC subfamily.</text>
</comment>
<keyword id="KW-0067">ATP-binding</keyword>
<keyword id="KW-0175">Coiled coil</keyword>
<keyword id="KW-0963">Cytoplasm</keyword>
<keyword id="KW-0206">Cytoskeleton</keyword>
<keyword id="KW-0493">Microtubule</keyword>
<keyword id="KW-0505">Motor protein</keyword>
<keyword id="KW-0547">Nucleotide-binding</keyword>
<keyword id="KW-1185">Reference proteome</keyword>
<organism>
    <name type="scientific">Oryza sativa subsp. japonica</name>
    <name type="common">Rice</name>
    <dbReference type="NCBI Taxonomy" id="39947"/>
    <lineage>
        <taxon>Eukaryota</taxon>
        <taxon>Viridiplantae</taxon>
        <taxon>Streptophyta</taxon>
        <taxon>Embryophyta</taxon>
        <taxon>Tracheophyta</taxon>
        <taxon>Spermatophyta</taxon>
        <taxon>Magnoliopsida</taxon>
        <taxon>Liliopsida</taxon>
        <taxon>Poales</taxon>
        <taxon>Poaceae</taxon>
        <taxon>BOP clade</taxon>
        <taxon>Oryzoideae</taxon>
        <taxon>Oryzeae</taxon>
        <taxon>Oryzinae</taxon>
        <taxon>Oryza</taxon>
        <taxon>Oryza sativa</taxon>
    </lineage>
</organism>
<dbReference type="EMBL" id="AC078977">
    <property type="protein sequence ID" value="AAV44208.1"/>
    <property type="molecule type" value="Genomic_DNA"/>
</dbReference>
<dbReference type="EMBL" id="AP008211">
    <property type="protein sequence ID" value="BAH92914.1"/>
    <property type="molecule type" value="Genomic_DNA"/>
</dbReference>
<dbReference type="EMBL" id="AP014961">
    <property type="protein sequence ID" value="BAS91988.1"/>
    <property type="molecule type" value="Genomic_DNA"/>
</dbReference>
<dbReference type="EMBL" id="CM000142">
    <property type="protein sequence ID" value="EEE62121.1"/>
    <property type="molecule type" value="Genomic_DNA"/>
</dbReference>
<dbReference type="EMBL" id="AK068757">
    <property type="protein sequence ID" value="BAG91070.1"/>
    <property type="molecule type" value="mRNA"/>
</dbReference>
<dbReference type="RefSeq" id="XP_015639197.1">
    <property type="nucleotide sequence ID" value="XM_015783711.1"/>
</dbReference>
<dbReference type="RefSeq" id="XP_015639198.1">
    <property type="nucleotide sequence ID" value="XM_015783712.1"/>
</dbReference>
<dbReference type="SMR" id="Q5W7C6"/>
<dbReference type="FunCoup" id="Q5W7C6">
    <property type="interactions" value="1513"/>
</dbReference>
<dbReference type="STRING" id="39947.Q5W7C6"/>
<dbReference type="iPTMnet" id="Q5W7C6"/>
<dbReference type="PaxDb" id="39947-Q5W7C6"/>
<dbReference type="EnsemblPlants" id="Os05t0117798-01">
    <property type="protein sequence ID" value="Os05t0117798-01"/>
    <property type="gene ID" value="Os05g0117798"/>
</dbReference>
<dbReference type="GeneID" id="9268593"/>
<dbReference type="Gramene" id="Os05t0117798-01">
    <property type="protein sequence ID" value="Os05t0117798-01"/>
    <property type="gene ID" value="Os05g0117798"/>
</dbReference>
<dbReference type="KEGG" id="dosa:Os05g0117798"/>
<dbReference type="KEGG" id="osa:9268593"/>
<dbReference type="eggNOG" id="KOG0243">
    <property type="taxonomic scope" value="Eukaryota"/>
</dbReference>
<dbReference type="HOGENOM" id="CLU_001485_33_0_1"/>
<dbReference type="InParanoid" id="Q5W7C6"/>
<dbReference type="OMA" id="EMRLHTP"/>
<dbReference type="OrthoDB" id="3176171at2759"/>
<dbReference type="Proteomes" id="UP000000763">
    <property type="component" value="Chromosome 5"/>
</dbReference>
<dbReference type="Proteomes" id="UP000007752">
    <property type="component" value="Chromosome 5"/>
</dbReference>
<dbReference type="Proteomes" id="UP000059680">
    <property type="component" value="Chromosome 5"/>
</dbReference>
<dbReference type="GO" id="GO:0005737">
    <property type="term" value="C:cytoplasm"/>
    <property type="evidence" value="ECO:0007669"/>
    <property type="project" value="UniProtKB-KW"/>
</dbReference>
<dbReference type="GO" id="GO:0072686">
    <property type="term" value="C:mitotic spindle"/>
    <property type="evidence" value="ECO:0000318"/>
    <property type="project" value="GO_Central"/>
</dbReference>
<dbReference type="GO" id="GO:0005876">
    <property type="term" value="C:spindle microtubule"/>
    <property type="evidence" value="ECO:0000318"/>
    <property type="project" value="GO_Central"/>
</dbReference>
<dbReference type="GO" id="GO:0005524">
    <property type="term" value="F:ATP binding"/>
    <property type="evidence" value="ECO:0007669"/>
    <property type="project" value="UniProtKB-KW"/>
</dbReference>
<dbReference type="GO" id="GO:0008017">
    <property type="term" value="F:microtubule binding"/>
    <property type="evidence" value="ECO:0007669"/>
    <property type="project" value="InterPro"/>
</dbReference>
<dbReference type="GO" id="GO:0008574">
    <property type="term" value="F:plus-end-directed microtubule motor activity"/>
    <property type="evidence" value="ECO:0000318"/>
    <property type="project" value="GO_Central"/>
</dbReference>
<dbReference type="GO" id="GO:0007018">
    <property type="term" value="P:microtubule-based movement"/>
    <property type="evidence" value="ECO:0007669"/>
    <property type="project" value="InterPro"/>
</dbReference>
<dbReference type="GO" id="GO:0090307">
    <property type="term" value="P:mitotic spindle assembly"/>
    <property type="evidence" value="ECO:0000318"/>
    <property type="project" value="GO_Central"/>
</dbReference>
<dbReference type="GO" id="GO:0051231">
    <property type="term" value="P:spindle elongation"/>
    <property type="evidence" value="ECO:0000318"/>
    <property type="project" value="GO_Central"/>
</dbReference>
<dbReference type="CDD" id="cd01364">
    <property type="entry name" value="KISc_BimC_Eg5"/>
    <property type="match status" value="1"/>
</dbReference>
<dbReference type="FunFam" id="3.40.850.10:FF:000019">
    <property type="entry name" value="Kinesin-like protein KIN-5D"/>
    <property type="match status" value="1"/>
</dbReference>
<dbReference type="Gene3D" id="3.40.850.10">
    <property type="entry name" value="Kinesin motor domain"/>
    <property type="match status" value="1"/>
</dbReference>
<dbReference type="InterPro" id="IPR047149">
    <property type="entry name" value="KIF11-like"/>
</dbReference>
<dbReference type="InterPro" id="IPR047241">
    <property type="entry name" value="KIF11-like_kin_motor_dom"/>
</dbReference>
<dbReference type="InterPro" id="IPR019821">
    <property type="entry name" value="Kinesin_motor_CS"/>
</dbReference>
<dbReference type="InterPro" id="IPR001752">
    <property type="entry name" value="Kinesin_motor_dom"/>
</dbReference>
<dbReference type="InterPro" id="IPR036961">
    <property type="entry name" value="Kinesin_motor_dom_sf"/>
</dbReference>
<dbReference type="InterPro" id="IPR027417">
    <property type="entry name" value="P-loop_NTPase"/>
</dbReference>
<dbReference type="PANTHER" id="PTHR47970">
    <property type="entry name" value="KINESIN-LIKE PROTEIN KIF11"/>
    <property type="match status" value="1"/>
</dbReference>
<dbReference type="PANTHER" id="PTHR47970:SF9">
    <property type="entry name" value="KINESIN-LIKE PROTEIN KIN-5D"/>
    <property type="match status" value="1"/>
</dbReference>
<dbReference type="Pfam" id="PF00225">
    <property type="entry name" value="Kinesin"/>
    <property type="match status" value="1"/>
</dbReference>
<dbReference type="PRINTS" id="PR00380">
    <property type="entry name" value="KINESINHEAVY"/>
</dbReference>
<dbReference type="SMART" id="SM00129">
    <property type="entry name" value="KISc"/>
    <property type="match status" value="1"/>
</dbReference>
<dbReference type="SUPFAM" id="SSF52540">
    <property type="entry name" value="P-loop containing nucleoside triphosphate hydrolases"/>
    <property type="match status" value="1"/>
</dbReference>
<dbReference type="PROSITE" id="PS00411">
    <property type="entry name" value="KINESIN_MOTOR_1"/>
    <property type="match status" value="1"/>
</dbReference>
<dbReference type="PROSITE" id="PS50067">
    <property type="entry name" value="KINESIN_MOTOR_2"/>
    <property type="match status" value="1"/>
</dbReference>